<keyword id="KW-0961">Cell wall biogenesis/degradation</keyword>
<keyword id="KW-0963">Cytoplasm</keyword>
<keyword id="KW-0596">Phosphopantetheine</keyword>
<keyword id="KW-0597">Phosphoprotein</keyword>
<reference key="1">
    <citation type="submission" date="2007-06" db="EMBL/GenBank/DDBJ databases">
        <title>Complete sequence of chromosome of Staphylococcus aureus subsp. aureus JH1.</title>
        <authorList>
            <consortium name="US DOE Joint Genome Institute"/>
            <person name="Copeland A."/>
            <person name="Lucas S."/>
            <person name="Lapidus A."/>
            <person name="Barry K."/>
            <person name="Detter J.C."/>
            <person name="Glavina del Rio T."/>
            <person name="Hammon N."/>
            <person name="Israni S."/>
            <person name="Dalin E."/>
            <person name="Tice H."/>
            <person name="Pitluck S."/>
            <person name="Chain P."/>
            <person name="Malfatti S."/>
            <person name="Shin M."/>
            <person name="Vergez L."/>
            <person name="Schmutz J."/>
            <person name="Larimer F."/>
            <person name="Land M."/>
            <person name="Hauser L."/>
            <person name="Kyrpides N."/>
            <person name="Ivanova N."/>
            <person name="Tomasz A."/>
            <person name="Richardson P."/>
        </authorList>
    </citation>
    <scope>NUCLEOTIDE SEQUENCE [LARGE SCALE GENOMIC DNA]</scope>
    <source>
        <strain>JH1</strain>
    </source>
</reference>
<comment type="function">
    <text evidence="1">Carrier protein involved in the D-alanylation of lipoteichoic acid (LTA). The loading of thioester-linked D-alanine onto DltC is catalyzed by D-alanine--D-alanyl carrier protein ligase DltA. The DltC-carried D-alanyl group is further transferred to cell membrane phosphatidylglycerol (PG) by forming an ester bond, probably catalyzed by DltD. D-alanylation of LTA plays an important role in modulating the properties of the cell wall in Gram-positive bacteria, influencing the net charge of the cell wall.</text>
</comment>
<comment type="pathway">
    <text evidence="1">Cell wall biogenesis; lipoteichoic acid biosynthesis.</text>
</comment>
<comment type="subcellular location">
    <subcellularLocation>
        <location evidence="1">Cytoplasm</location>
    </subcellularLocation>
</comment>
<comment type="PTM">
    <text evidence="1">4'-phosphopantetheine is transferred from CoA to a specific serine of apo-DCP.</text>
</comment>
<comment type="similarity">
    <text evidence="1">Belongs to the DltC family.</text>
</comment>
<name>DLTC_STAA2</name>
<dbReference type="EMBL" id="CP000736">
    <property type="protein sequence ID" value="ABR51809.1"/>
    <property type="molecule type" value="Genomic_DNA"/>
</dbReference>
<dbReference type="SMR" id="A6U041"/>
<dbReference type="KEGG" id="sah:SaurJH1_0953"/>
<dbReference type="HOGENOM" id="CLU_108696_19_0_9"/>
<dbReference type="UniPathway" id="UPA00556"/>
<dbReference type="GO" id="GO:0005737">
    <property type="term" value="C:cytoplasm"/>
    <property type="evidence" value="ECO:0007669"/>
    <property type="project" value="UniProtKB-SubCell"/>
</dbReference>
<dbReference type="GO" id="GO:0036370">
    <property type="term" value="F:D-alanyl carrier activity"/>
    <property type="evidence" value="ECO:0007669"/>
    <property type="project" value="UniProtKB-UniRule"/>
</dbReference>
<dbReference type="GO" id="GO:0071555">
    <property type="term" value="P:cell wall organization"/>
    <property type="evidence" value="ECO:0007669"/>
    <property type="project" value="UniProtKB-KW"/>
</dbReference>
<dbReference type="GO" id="GO:0070395">
    <property type="term" value="P:lipoteichoic acid biosynthetic process"/>
    <property type="evidence" value="ECO:0007669"/>
    <property type="project" value="UniProtKB-UniRule"/>
</dbReference>
<dbReference type="Gene3D" id="1.10.1200.10">
    <property type="entry name" value="ACP-like"/>
    <property type="match status" value="1"/>
</dbReference>
<dbReference type="HAMAP" id="MF_00565">
    <property type="entry name" value="DltC"/>
    <property type="match status" value="1"/>
</dbReference>
<dbReference type="InterPro" id="IPR036736">
    <property type="entry name" value="ACP-like_sf"/>
</dbReference>
<dbReference type="InterPro" id="IPR003230">
    <property type="entry name" value="DltC"/>
</dbReference>
<dbReference type="InterPro" id="IPR009081">
    <property type="entry name" value="PP-bd_ACP"/>
</dbReference>
<dbReference type="NCBIfam" id="TIGR01688">
    <property type="entry name" value="dltC"/>
    <property type="match status" value="1"/>
</dbReference>
<dbReference type="NCBIfam" id="NF003464">
    <property type="entry name" value="PRK05087.1"/>
    <property type="match status" value="1"/>
</dbReference>
<dbReference type="Pfam" id="PF00550">
    <property type="entry name" value="PP-binding"/>
    <property type="match status" value="1"/>
</dbReference>
<dbReference type="SUPFAM" id="SSF47336">
    <property type="entry name" value="ACP-like"/>
    <property type="match status" value="1"/>
</dbReference>
<dbReference type="PROSITE" id="PS50075">
    <property type="entry name" value="CARRIER"/>
    <property type="match status" value="1"/>
</dbReference>
<organism>
    <name type="scientific">Staphylococcus aureus (strain JH1)</name>
    <dbReference type="NCBI Taxonomy" id="359787"/>
    <lineage>
        <taxon>Bacteria</taxon>
        <taxon>Bacillati</taxon>
        <taxon>Bacillota</taxon>
        <taxon>Bacilli</taxon>
        <taxon>Bacillales</taxon>
        <taxon>Staphylococcaceae</taxon>
        <taxon>Staphylococcus</taxon>
    </lineage>
</organism>
<protein>
    <recommendedName>
        <fullName evidence="1">D-alanyl carrier protein</fullName>
        <shortName evidence="1">DCP</shortName>
    </recommendedName>
    <alternativeName>
        <fullName evidence="1">D-alanine--poly(phosphoribitol) ligase subunit 2</fullName>
    </alternativeName>
</protein>
<feature type="chain" id="PRO_1000082307" description="D-alanyl carrier protein">
    <location>
        <begin position="1"/>
        <end position="78"/>
    </location>
</feature>
<feature type="domain" description="Carrier" evidence="1">
    <location>
        <begin position="1"/>
        <end position="78"/>
    </location>
</feature>
<feature type="modified residue" description="O-(pantetheine 4'-phosphoryl)serine" evidence="1">
    <location>
        <position position="36"/>
    </location>
</feature>
<proteinExistence type="inferred from homology"/>
<sequence length="78" mass="9063">MEFREQVLNLLAEVAENDIVKENPDVEIFEEGIIDSFQTVGLLLEIQNKLDIEVSIMDFDRDEWATPNKIVEALEELR</sequence>
<gene>
    <name evidence="1" type="primary">dltC</name>
    <name type="ordered locus">SaurJH1_0953</name>
</gene>
<evidence type="ECO:0000255" key="1">
    <source>
        <dbReference type="HAMAP-Rule" id="MF_00565"/>
    </source>
</evidence>
<accession>A6U041</accession>